<accession>O97237</accession>
<comment type="biotechnology">
    <text evidence="4">Possible candidate for an effective malaria vaccine as determined by epitope response in sera.</text>
</comment>
<proteinExistence type="evidence at protein level"/>
<evidence type="ECO:0000255" key="1"/>
<evidence type="ECO:0000255" key="2">
    <source>
        <dbReference type="PROSITE-ProRule" id="PRU00250"/>
    </source>
</evidence>
<evidence type="ECO:0000256" key="3">
    <source>
        <dbReference type="SAM" id="MobiDB-lite"/>
    </source>
</evidence>
<evidence type="ECO:0000269" key="4">
    <source>
    </source>
</evidence>
<evidence type="ECO:0000305" key="5"/>
<evidence type="ECO:0000312" key="6">
    <source>
        <dbReference type="EMBL" id="CAB39003.3"/>
    </source>
</evidence>
<reference key="1">
    <citation type="journal article" date="1999" name="Nature">
        <title>The complete nucleotide sequence of chromosome 3 of Plasmodium falciparum.</title>
        <authorList>
            <person name="Bowman S."/>
            <person name="Lawson D."/>
            <person name="Basham D."/>
            <person name="Brown D."/>
            <person name="Chillingworth T."/>
            <person name="Churcher C.M."/>
            <person name="Craig A."/>
            <person name="Davies R.M."/>
            <person name="Devlin K."/>
            <person name="Feltwell T."/>
            <person name="Gentles S."/>
            <person name="Gwilliam R."/>
            <person name="Hamlin N."/>
            <person name="Harris D."/>
            <person name="Holroyd S."/>
            <person name="Hornsby T."/>
            <person name="Horrocks P."/>
            <person name="Jagels K."/>
            <person name="Jassal B."/>
            <person name="Kyes S."/>
            <person name="McLean J."/>
            <person name="Moule S."/>
            <person name="Mungall K.L."/>
            <person name="Murphy L."/>
            <person name="Oliver K."/>
            <person name="Quail M.A."/>
            <person name="Rajandream M.A."/>
            <person name="Rutter S."/>
            <person name="Skelton J."/>
            <person name="Squares R."/>
            <person name="Squares S."/>
            <person name="Sulston J.E."/>
            <person name="Whitehead S."/>
            <person name="Woodward J.R."/>
            <person name="Newbold C."/>
            <person name="Barrell B.G."/>
        </authorList>
    </citation>
    <scope>NUCLEOTIDE SEQUENCE [LARGE SCALE GENOMIC DNA]</scope>
    <source>
        <strain>3D7</strain>
    </source>
</reference>
<reference key="2">
    <citation type="journal article" date="2002" name="Nature">
        <title>Genome sequence of the human malaria parasite Plasmodium falciparum.</title>
        <authorList>
            <person name="Gardner M.J."/>
            <person name="Hall N."/>
            <person name="Fung E."/>
            <person name="White O."/>
            <person name="Berriman M."/>
            <person name="Hyman R.W."/>
            <person name="Carlton J.M."/>
            <person name="Pain A."/>
            <person name="Nelson K.E."/>
            <person name="Bowman S."/>
            <person name="Paulsen I.T."/>
            <person name="James K.D."/>
            <person name="Eisen J.A."/>
            <person name="Rutherford K.M."/>
            <person name="Salzberg S.L."/>
            <person name="Craig A."/>
            <person name="Kyes S."/>
            <person name="Chan M.-S."/>
            <person name="Nene V."/>
            <person name="Shallom S.J."/>
            <person name="Suh B."/>
            <person name="Peterson J."/>
            <person name="Angiuoli S."/>
            <person name="Pertea M."/>
            <person name="Allen J."/>
            <person name="Selengut J."/>
            <person name="Haft D."/>
            <person name="Mather M.W."/>
            <person name="Vaidya A.B."/>
            <person name="Martin D.M.A."/>
            <person name="Fairlamb A.H."/>
            <person name="Fraunholz M.J."/>
            <person name="Roos D.S."/>
            <person name="Ralph S.A."/>
            <person name="McFadden G.I."/>
            <person name="Cummings L.M."/>
            <person name="Subramanian G.M."/>
            <person name="Mungall C."/>
            <person name="Venter J.C."/>
            <person name="Carucci D.J."/>
            <person name="Hoffman S.L."/>
            <person name="Newbold C."/>
            <person name="Davis R.W."/>
            <person name="Fraser C.M."/>
            <person name="Barrell B.G."/>
        </authorList>
    </citation>
    <scope>NUCLEOTIDE SEQUENCE [LARGE SCALE GENOMIC DNA]</scope>
    <source>
        <strain>3D7</strain>
    </source>
</reference>
<reference evidence="6" key="3">
    <citation type="journal article" date="2002" name="Nature">
        <title>Sequence of Plasmodium falciparum chromosomes 1, 3-9 and 13.</title>
        <authorList>
            <person name="Hall N."/>
            <person name="Pain A."/>
            <person name="Berriman M."/>
            <person name="Churcher C.M."/>
            <person name="Harris B."/>
            <person name="Harris D."/>
            <person name="Mungall K.L."/>
            <person name="Bowman S."/>
            <person name="Atkin R."/>
            <person name="Baker S."/>
            <person name="Barron A."/>
            <person name="Brooks K."/>
            <person name="Buckee C.O."/>
            <person name="Burrows C."/>
            <person name="Cherevach I."/>
            <person name="Chillingworth C."/>
            <person name="Chillingworth T."/>
            <person name="Christodoulou Z."/>
            <person name="Clark L."/>
            <person name="Clark R."/>
            <person name="Corton C."/>
            <person name="Cronin A."/>
            <person name="Davies R.M."/>
            <person name="Davis P."/>
            <person name="Dear P."/>
            <person name="Dearden F."/>
            <person name="Doggett J."/>
            <person name="Feltwell T."/>
            <person name="Goble A."/>
            <person name="Goodhead I."/>
            <person name="Gwilliam R."/>
            <person name="Hamlin N."/>
            <person name="Hance Z."/>
            <person name="Harper D."/>
            <person name="Hauser H."/>
            <person name="Hornsby T."/>
            <person name="Holroyd S."/>
            <person name="Horrocks P."/>
            <person name="Humphray S."/>
            <person name="Jagels K."/>
            <person name="James K.D."/>
            <person name="Johnson D."/>
            <person name="Kerhornou A."/>
            <person name="Knights A."/>
            <person name="Konfortov B."/>
            <person name="Kyes S."/>
            <person name="Larke N."/>
            <person name="Lawson D."/>
            <person name="Lennard N."/>
            <person name="Line A."/>
            <person name="Maddison M."/>
            <person name="Mclean J."/>
            <person name="Mooney P."/>
            <person name="Moule S."/>
            <person name="Murphy L."/>
            <person name="Oliver K."/>
            <person name="Ormond D."/>
            <person name="Price C."/>
            <person name="Quail M.A."/>
            <person name="Rabbinowitsch E."/>
            <person name="Rajandream M.A."/>
            <person name="Rutter S."/>
            <person name="Rutherford K.M."/>
            <person name="Sanders M."/>
            <person name="Simmonds M."/>
            <person name="Seeger K."/>
            <person name="Sharp S."/>
            <person name="Smith R."/>
            <person name="Squares R."/>
            <person name="Squares S."/>
            <person name="Stevens K."/>
            <person name="Taylor K."/>
            <person name="Tivey A."/>
            <person name="Unwin L."/>
            <person name="Whitehead S."/>
            <person name="Woodward J.R."/>
            <person name="Sulston J.E."/>
            <person name="Craig A."/>
            <person name="Newbold C."/>
            <person name="Barrell B.G."/>
        </authorList>
    </citation>
    <scope>NUCLEOTIDE SEQUENCE [LARGE SCALE GENOMIC DNA]</scope>
    <source>
        <strain>3D7</strain>
    </source>
</reference>
<reference evidence="5" key="4">
    <citation type="journal article" date="2007" name="PLoS ONE">
        <title>Rapid identification of malaria vaccine candidates based on alpha-helical coiled coil protein motif.</title>
        <authorList>
            <person name="Villard V."/>
            <person name="Agak G.W."/>
            <person name="Frank G."/>
            <person name="Jafarshad A."/>
            <person name="Servis C."/>
            <person name="Nebie I."/>
            <person name="Sirima S.B."/>
            <person name="Felger I."/>
            <person name="Arevalo-Herrera M."/>
            <person name="Herrera S."/>
            <person name="Heitz F."/>
            <person name="Baecker V."/>
            <person name="Druilhe P."/>
            <person name="Kajava A.V."/>
            <person name="Corradin G."/>
        </authorList>
    </citation>
    <scope>SYNTHESIS OF 798-837</scope>
    <scope>POSSIBLE CANDIDATE MALARIA EPITOPE</scope>
</reference>
<name>YGCC1_PLAF7</name>
<keyword id="KW-0175">Coiled coil</keyword>
<keyword id="KW-0477">Merozoite</keyword>
<keyword id="KW-1185">Reference proteome</keyword>
<organism>
    <name type="scientific">Plasmodium falciparum (isolate 3D7)</name>
    <dbReference type="NCBI Taxonomy" id="36329"/>
    <lineage>
        <taxon>Eukaryota</taxon>
        <taxon>Sar</taxon>
        <taxon>Alveolata</taxon>
        <taxon>Apicomplexa</taxon>
        <taxon>Aconoidasida</taxon>
        <taxon>Haemosporida</taxon>
        <taxon>Plasmodiidae</taxon>
        <taxon>Plasmodium</taxon>
        <taxon>Plasmodium (Laverania)</taxon>
    </lineage>
</organism>
<feature type="chain" id="PRO_0000364021" description="GRIP and coiled-coil domain-containing protein">
    <location>
        <begin position="1"/>
        <end position="1139"/>
    </location>
</feature>
<feature type="domain" description="GRIP" evidence="2">
    <location>
        <begin position="1084"/>
        <end position="1135"/>
    </location>
</feature>
<feature type="region of interest" description="Disordered" evidence="3">
    <location>
        <begin position="366"/>
        <end position="388"/>
    </location>
</feature>
<feature type="region of interest" description="Disordered" evidence="3">
    <location>
        <begin position="1004"/>
        <end position="1024"/>
    </location>
</feature>
<feature type="coiled-coil region" evidence="1">
    <location>
        <begin position="472"/>
        <end position="648"/>
    </location>
</feature>
<feature type="coiled-coil region" evidence="1">
    <location>
        <begin position="758"/>
        <end position="877"/>
    </location>
</feature>
<feature type="coiled-coil region" evidence="1">
    <location>
        <begin position="1043"/>
        <end position="1084"/>
    </location>
</feature>
<feature type="compositionally biased region" description="Polar residues" evidence="3">
    <location>
        <begin position="369"/>
        <end position="380"/>
    </location>
</feature>
<feature type="compositionally biased region" description="Low complexity" evidence="3">
    <location>
        <begin position="1009"/>
        <end position="1022"/>
    </location>
</feature>
<dbReference type="EMBL" id="AL844502">
    <property type="protein sequence ID" value="CAB39003.3"/>
    <property type="molecule type" value="Genomic_DNA"/>
</dbReference>
<dbReference type="RefSeq" id="XP_001351128.2">
    <property type="nucleotide sequence ID" value="XM_001351092.2"/>
</dbReference>
<dbReference type="SMR" id="O97237"/>
<dbReference type="BioGRID" id="1209621">
    <property type="interactions" value="5"/>
</dbReference>
<dbReference type="FunCoup" id="O97237">
    <property type="interactions" value="683"/>
</dbReference>
<dbReference type="IntAct" id="O97237">
    <property type="interactions" value="6"/>
</dbReference>
<dbReference type="STRING" id="36329.O97237"/>
<dbReference type="PaxDb" id="5833-PFC0235w"/>
<dbReference type="EnsemblProtists" id="CAB39003">
    <property type="protein sequence ID" value="CAB39003"/>
    <property type="gene ID" value="PF3D7_0305200"/>
</dbReference>
<dbReference type="GeneID" id="814370"/>
<dbReference type="KEGG" id="pfa:PF3D7_0305200"/>
<dbReference type="HOGENOM" id="CLU_278062_0_0_1"/>
<dbReference type="InParanoid" id="O97237"/>
<dbReference type="OrthoDB" id="385258at2759"/>
<dbReference type="PhylomeDB" id="O97237"/>
<dbReference type="Proteomes" id="UP000001450">
    <property type="component" value="Chromosome 3"/>
</dbReference>
<dbReference type="InterPro" id="IPR053127">
    <property type="entry name" value="Chromatin_remod_comp_subunit"/>
</dbReference>
<dbReference type="InterPro" id="IPR000237">
    <property type="entry name" value="GRIP_dom"/>
</dbReference>
<dbReference type="PANTHER" id="PTHR37929">
    <property type="entry name" value="GRIP AND COILED-COIL DOMAIN-CONTAINING PROTEIN PFC0235W"/>
    <property type="match status" value="1"/>
</dbReference>
<dbReference type="PANTHER" id="PTHR37929:SF1">
    <property type="entry name" value="SWI_SNF GLOBAL TRANSCRIPTION ACTIVATOR COMPLEX SUBUNIT SNF59"/>
    <property type="match status" value="1"/>
</dbReference>
<dbReference type="PROSITE" id="PS50913">
    <property type="entry name" value="GRIP"/>
    <property type="match status" value="1"/>
</dbReference>
<protein>
    <recommendedName>
        <fullName>GRIP and coiled-coil domain-containing protein</fullName>
    </recommendedName>
</protein>
<gene>
    <name type="ORF">PF3D7_0305200</name>
    <name type="ORF">PFC0235w</name>
</gene>
<sequence>MNFCDNNEMNETKNFMMSNKNDDIVVDCDEYIDGNVFEKNTNMGNIYDENYNVDMKNDNLLSKLNDNISFTYTTNGQVEKQENEIKEKQNILHYQIYIDNDEDKYKYCSNSNLHKNEEEHEKGSPNNIYEELDNNLEKKYFYYNSDSKHCIDEKNETNDLENENVVTSMDVSYENVLNDNFIKSRSTSINYTDNSFVLNKENLKSSHHINGYYINDHDNIKSDIINDHDNIKSDIINDYDNIKGDKINEYDNIKSDKINDYDNIKSDIINDYDNIKSDKINDYDNIKSDKINDYDNIKSDKINDYDNIKSDKINDYDNIKSDKINHYDNIKSDKINDYDNIKSDKINDYDNIKSDKINDYDNIKYNDDSQINNNVSNKVNSPDDDPNTYEKDKKDIINCNIYEENKNNMNNIIHNDKENIHMVDTGKNEENNNIDNKNNDDINKVNVLTRVDTENYILNEENILPLHTNDDVTKLLDEINDLKNTIENMKKEKINLLSKFKAYTLNNKKELEELKIKCKNKEEQIKMYENKLQNKEDEIMNYVNEIQNKDKKIESYHIKLHNKEEEIMNYVNEIQNKEEEIIKYVNELQNSDVQKEKKELKTINEVLKNTNEKLEKEITSLLGEMKKIEEENKVLKIFKEEKNKINNEKVTQIKGDDINDDNDMKFKQILLDNKTFNKLLVNELNIVEENILFCFSIDKDKNRLLVCIKQNDDNFFVIPNCIFDEKFPGLQKKTESMIIQDIHEKEILELKNKQMNELYILKKEKEDIYKEYEEYKKKVTSLINETNYNYKNIEEKENEIKELNNTLNKYKEEMNNYKEEIIVINEKYKLLEIELCKEKNIRDQQNVGISDLKKKMLKEKIELEKKYKEQYEKETQQKINDMKIIFDNKEKILQDQIDDLLHKIEKLTFSNDEKTKTIENLQIYMDNDDNIMNQEGIQKNEKKQIIDNPINTDEKDLLNYIPDNHINSDLNHINSNVENDYVEKRNKNNVHLSKKETNYQHNINEQENDNNNNNNNNNNNNNVEKLKSINSTNTSIPIYPYEYKKIRKKLETYEILLNEQQEGKKKMTEEINSLKNQVKNYESINGNYQHIIYQKNILSNFIAQIPSRIQVDDYVSVIFNSFNFSNQEIEAINIKRSKK</sequence>